<reference key="1">
    <citation type="journal article" date="2004" name="Proc. Natl. Acad. Sci. U.S.A.">
        <title>Genome sequence of the enterobacterial phytopathogen Erwinia carotovora subsp. atroseptica and characterization of virulence factors.</title>
        <authorList>
            <person name="Bell K.S."/>
            <person name="Sebaihia M."/>
            <person name="Pritchard L."/>
            <person name="Holden M.T.G."/>
            <person name="Hyman L.J."/>
            <person name="Holeva M.C."/>
            <person name="Thomson N.R."/>
            <person name="Bentley S.D."/>
            <person name="Churcher L.J.C."/>
            <person name="Mungall K."/>
            <person name="Atkin R."/>
            <person name="Bason N."/>
            <person name="Brooks K."/>
            <person name="Chillingworth T."/>
            <person name="Clark K."/>
            <person name="Doggett J."/>
            <person name="Fraser A."/>
            <person name="Hance Z."/>
            <person name="Hauser H."/>
            <person name="Jagels K."/>
            <person name="Moule S."/>
            <person name="Norbertczak H."/>
            <person name="Ormond D."/>
            <person name="Price C."/>
            <person name="Quail M.A."/>
            <person name="Sanders M."/>
            <person name="Walker D."/>
            <person name="Whitehead S."/>
            <person name="Salmond G.P.C."/>
            <person name="Birch P.R.J."/>
            <person name="Parkhill J."/>
            <person name="Toth I.K."/>
        </authorList>
    </citation>
    <scope>NUCLEOTIDE SEQUENCE [LARGE SCALE GENOMIC DNA]</scope>
    <source>
        <strain>SCRI 1043 / ATCC BAA-672</strain>
    </source>
</reference>
<name>SOTB_PECAS</name>
<comment type="function">
    <text evidence="1">Involved in the efflux of sugars. The physiological role may be the reduction of the intracellular concentration of toxic sugars or sugar metabolites.</text>
</comment>
<comment type="subcellular location">
    <subcellularLocation>
        <location evidence="1">Cell inner membrane</location>
        <topology evidence="1">Multi-pass membrane protein</topology>
    </subcellularLocation>
</comment>
<comment type="similarity">
    <text evidence="1">Belongs to the major facilitator superfamily. SotB (TC 2.A.1.2) family.</text>
</comment>
<organism>
    <name type="scientific">Pectobacterium atrosepticum (strain SCRI 1043 / ATCC BAA-672)</name>
    <name type="common">Erwinia carotovora subsp. atroseptica</name>
    <dbReference type="NCBI Taxonomy" id="218491"/>
    <lineage>
        <taxon>Bacteria</taxon>
        <taxon>Pseudomonadati</taxon>
        <taxon>Pseudomonadota</taxon>
        <taxon>Gammaproteobacteria</taxon>
        <taxon>Enterobacterales</taxon>
        <taxon>Pectobacteriaceae</taxon>
        <taxon>Pectobacterium</taxon>
    </lineage>
</organism>
<dbReference type="EMBL" id="BX950851">
    <property type="protein sequence ID" value="CAG77206.1"/>
    <property type="molecule type" value="Genomic_DNA"/>
</dbReference>
<dbReference type="RefSeq" id="WP_011095773.1">
    <property type="nucleotide sequence ID" value="NC_004547.2"/>
</dbReference>
<dbReference type="SMR" id="Q6CZ44"/>
<dbReference type="STRING" id="218491.ECA4309"/>
<dbReference type="KEGG" id="eca:ECA4309"/>
<dbReference type="eggNOG" id="COG2814">
    <property type="taxonomic scope" value="Bacteria"/>
</dbReference>
<dbReference type="HOGENOM" id="CLU_001265_61_1_6"/>
<dbReference type="OrthoDB" id="9788453at2"/>
<dbReference type="Proteomes" id="UP000007966">
    <property type="component" value="Chromosome"/>
</dbReference>
<dbReference type="GO" id="GO:0005886">
    <property type="term" value="C:plasma membrane"/>
    <property type="evidence" value="ECO:0007669"/>
    <property type="project" value="UniProtKB-SubCell"/>
</dbReference>
<dbReference type="GO" id="GO:0015144">
    <property type="term" value="F:carbohydrate transmembrane transporter activity"/>
    <property type="evidence" value="ECO:0007669"/>
    <property type="project" value="UniProtKB-UniRule"/>
</dbReference>
<dbReference type="CDD" id="cd17324">
    <property type="entry name" value="MFS_NepI_like"/>
    <property type="match status" value="1"/>
</dbReference>
<dbReference type="Gene3D" id="1.20.1250.20">
    <property type="entry name" value="MFS general substrate transporter like domains"/>
    <property type="match status" value="1"/>
</dbReference>
<dbReference type="HAMAP" id="MF_00517">
    <property type="entry name" value="MFS_SotB"/>
    <property type="match status" value="1"/>
</dbReference>
<dbReference type="InterPro" id="IPR011701">
    <property type="entry name" value="MFS"/>
</dbReference>
<dbReference type="InterPro" id="IPR020846">
    <property type="entry name" value="MFS_dom"/>
</dbReference>
<dbReference type="InterPro" id="IPR050189">
    <property type="entry name" value="MFS_Efflux_Transporters"/>
</dbReference>
<dbReference type="InterPro" id="IPR036259">
    <property type="entry name" value="MFS_trans_sf"/>
</dbReference>
<dbReference type="InterPro" id="IPR023495">
    <property type="entry name" value="Sugar_effux_transptr_put"/>
</dbReference>
<dbReference type="NCBIfam" id="NF002921">
    <property type="entry name" value="PRK03545.1"/>
    <property type="match status" value="1"/>
</dbReference>
<dbReference type="PANTHER" id="PTHR43124">
    <property type="entry name" value="PURINE EFFLUX PUMP PBUE"/>
    <property type="match status" value="1"/>
</dbReference>
<dbReference type="PANTHER" id="PTHR43124:SF4">
    <property type="entry name" value="SUGAR EFFLUX TRANSPORTER"/>
    <property type="match status" value="1"/>
</dbReference>
<dbReference type="Pfam" id="PF07690">
    <property type="entry name" value="MFS_1"/>
    <property type="match status" value="1"/>
</dbReference>
<dbReference type="SUPFAM" id="SSF103473">
    <property type="entry name" value="MFS general substrate transporter"/>
    <property type="match status" value="1"/>
</dbReference>
<dbReference type="PROSITE" id="PS50850">
    <property type="entry name" value="MFS"/>
    <property type="match status" value="1"/>
</dbReference>
<gene>
    <name evidence="1" type="primary">sotB</name>
    <name type="ordered locus">ECA4309</name>
</gene>
<proteinExistence type="inferred from homology"/>
<accession>Q6CZ44</accession>
<evidence type="ECO:0000255" key="1">
    <source>
        <dbReference type="HAMAP-Rule" id="MF_00517"/>
    </source>
</evidence>
<sequence>MTRSPRSTAWLRVVSLSLAAFIFNTAEFAPVALLSDIAASFSMSAAQVGLIITIYAWVVGLMSLPCMLLSSDMERRSLLIKIFILFAISNVLSGLAWNYWVLIMARIGVALSHAVFWSITASLVVRLAPADKKAQALSLLATGTALALVLGLPLGRVVGQYLGWRVTFVLIGLIAAVIMVGLMKLLPVLPSSNSGSLKSLPLLLKRPALLCVYGLTVMIVTAHFTAYSYIEPFILKVALLSENFTTILLLIFGGAGIIGSMLFSRYSSKYPAGFLIVSFAFLAVCLLLLLPLSFSGWSLSTLCIVWGIAIMALSLGMQVKVLTLASDATDVAMALYSGIYNIGIGGGALLGNQVITHLGLPDIGYMGAAMAILATVCCIFTFVRYSHVLKTSLTN</sequence>
<feature type="chain" id="PRO_0000259247" description="Probable sugar efflux transporter">
    <location>
        <begin position="1"/>
        <end position="395"/>
    </location>
</feature>
<feature type="transmembrane region" description="Helical" evidence="1">
    <location>
        <begin position="13"/>
        <end position="33"/>
    </location>
</feature>
<feature type="transmembrane region" description="Helical" evidence="1">
    <location>
        <begin position="48"/>
        <end position="68"/>
    </location>
</feature>
<feature type="transmembrane region" description="Helical" evidence="1">
    <location>
        <begin position="82"/>
        <end position="102"/>
    </location>
</feature>
<feature type="transmembrane region" description="Helical" evidence="1">
    <location>
        <begin position="107"/>
        <end position="127"/>
    </location>
</feature>
<feature type="transmembrane region" description="Helical" evidence="1">
    <location>
        <begin position="134"/>
        <end position="154"/>
    </location>
</feature>
<feature type="transmembrane region" description="Helical" evidence="1">
    <location>
        <begin position="168"/>
        <end position="188"/>
    </location>
</feature>
<feature type="transmembrane region" description="Helical" evidence="1">
    <location>
        <begin position="207"/>
        <end position="227"/>
    </location>
</feature>
<feature type="transmembrane region" description="Helical" evidence="1">
    <location>
        <begin position="244"/>
        <end position="264"/>
    </location>
</feature>
<feature type="transmembrane region" description="Helical" evidence="1">
    <location>
        <begin position="272"/>
        <end position="292"/>
    </location>
</feature>
<feature type="transmembrane region" description="Helical" evidence="1">
    <location>
        <begin position="297"/>
        <end position="317"/>
    </location>
</feature>
<feature type="transmembrane region" description="Helical" evidence="1">
    <location>
        <begin position="331"/>
        <end position="351"/>
    </location>
</feature>
<feature type="transmembrane region" description="Helical" evidence="1">
    <location>
        <begin position="363"/>
        <end position="383"/>
    </location>
</feature>
<keyword id="KW-0997">Cell inner membrane</keyword>
<keyword id="KW-1003">Cell membrane</keyword>
<keyword id="KW-0472">Membrane</keyword>
<keyword id="KW-1185">Reference proteome</keyword>
<keyword id="KW-0762">Sugar transport</keyword>
<keyword id="KW-0812">Transmembrane</keyword>
<keyword id="KW-1133">Transmembrane helix</keyword>
<keyword id="KW-0813">Transport</keyword>
<protein>
    <recommendedName>
        <fullName evidence="1">Probable sugar efflux transporter</fullName>
    </recommendedName>
</protein>